<feature type="chain" id="PRO_0000129153" description="Floricaula/leafy-like protein">
    <location>
        <begin position="1"/>
        <end position="411"/>
    </location>
</feature>
<feature type="DNA-binding region" evidence="1">
    <location>
        <begin position="252"/>
        <end position="256"/>
    </location>
</feature>
<feature type="DNA-binding region" evidence="1">
    <location>
        <begin position="321"/>
        <end position="328"/>
    </location>
</feature>
<feature type="DNA-binding region" evidence="1">
    <location>
        <begin position="392"/>
        <end position="395"/>
    </location>
</feature>
<feature type="region of interest" description="Disordered" evidence="2">
    <location>
        <begin position="220"/>
        <end position="259"/>
    </location>
</feature>
<feature type="compositionally biased region" description="Basic residues" evidence="2">
    <location>
        <begin position="231"/>
        <end position="240"/>
    </location>
</feature>
<feature type="compositionally biased region" description="Basic and acidic residues" evidence="2">
    <location>
        <begin position="241"/>
        <end position="255"/>
    </location>
</feature>
<feature type="site" description="Interaction with DNA" evidence="1">
    <location>
        <position position="299"/>
    </location>
</feature>
<feature type="site" description="Interaction with DNA" evidence="1">
    <location>
        <position position="306"/>
    </location>
</feature>
<feature type="site" description="Interaction with DNA" evidence="1">
    <location>
        <position position="310"/>
    </location>
</feature>
<feature type="site" description="Interaction with DNA" evidence="1">
    <location>
        <position position="357"/>
    </location>
</feature>
<name>FLL_PINRA</name>
<gene>
    <name type="primary">FLL</name>
</gene>
<keyword id="KW-0010">Activator</keyword>
<keyword id="KW-0217">Developmental protein</keyword>
<keyword id="KW-0238">DNA-binding</keyword>
<keyword id="KW-0539">Nucleus</keyword>
<keyword id="KW-0804">Transcription</keyword>
<keyword id="KW-0805">Transcription regulation</keyword>
<protein>
    <recommendedName>
        <fullName>Floricaula/leafy-like protein</fullName>
    </recommendedName>
    <alternativeName>
        <fullName>PRFLL</fullName>
    </alternativeName>
</protein>
<proteinExistence type="evidence at transcript level"/>
<reference key="1">
    <citation type="journal article" date="1998" name="Planta">
        <title>PRFLL -a Pinus radiata homologue of FLORICAULA and LEAFY is expressed in buds containing vegetative shoot and undifferentiated male cone primordia.</title>
        <authorList>
            <person name="Mellerowicz E.J."/>
            <person name="Horgan K."/>
            <person name="Walden A."/>
            <person name="Coker A."/>
            <person name="Walter C."/>
        </authorList>
    </citation>
    <scope>NUCLEOTIDE SEQUENCE</scope>
</reference>
<reference key="2">
    <citation type="online journal article" date="1999" name="Plant Gene Register">
        <title>Nucleotide sequence of a Pinus radiata FLORICAULA/LEAFY-like gene (PRFLL).</title>
        <authorList>
            <person name="Moyle R.L."/>
            <person name="Walter C."/>
        </authorList>
        <locator>PGR99-013</locator>
    </citation>
    <scope>NUCLEOTIDE SEQUENCE</scope>
</reference>
<comment type="function">
    <text evidence="1">Probable transcription factor.</text>
</comment>
<comment type="subcellular location">
    <subcellularLocation>
        <location evidence="3">Nucleus</location>
    </subcellularLocation>
</comment>
<comment type="tissue specificity">
    <text>Expressed in vegetative buds and male cones but not in female cones, vascular tissue, roots or secondary needles.</text>
</comment>
<comment type="similarity">
    <text evidence="3">Belongs to the FLO/LFY family.</text>
</comment>
<accession>O04116</accession>
<organism>
    <name type="scientific">Pinus radiata</name>
    <name type="common">Monterey pine</name>
    <name type="synonym">Pinus insignis</name>
    <dbReference type="NCBI Taxonomy" id="3347"/>
    <lineage>
        <taxon>Eukaryota</taxon>
        <taxon>Viridiplantae</taxon>
        <taxon>Streptophyta</taxon>
        <taxon>Embryophyta</taxon>
        <taxon>Tracheophyta</taxon>
        <taxon>Spermatophyta</taxon>
        <taxon>Pinopsida</taxon>
        <taxon>Pinidae</taxon>
        <taxon>Conifers I</taxon>
        <taxon>Pinales</taxon>
        <taxon>Pinaceae</taxon>
        <taxon>Pinus</taxon>
        <taxon>Pinus subgen. Pinus</taxon>
    </lineage>
</organism>
<dbReference type="EMBL" id="U92008">
    <property type="protein sequence ID" value="AAB51587.1"/>
    <property type="molecule type" value="mRNA"/>
</dbReference>
<dbReference type="EMBL" id="AF109149">
    <property type="protein sequence ID" value="AAD16982.1"/>
    <property type="molecule type" value="Genomic_DNA"/>
</dbReference>
<dbReference type="PIR" id="T09607">
    <property type="entry name" value="T09607"/>
</dbReference>
<dbReference type="SMR" id="O04116"/>
<dbReference type="GO" id="GO:0005634">
    <property type="term" value="C:nucleus"/>
    <property type="evidence" value="ECO:0007669"/>
    <property type="project" value="UniProtKB-SubCell"/>
</dbReference>
<dbReference type="GO" id="GO:0003677">
    <property type="term" value="F:DNA binding"/>
    <property type="evidence" value="ECO:0007669"/>
    <property type="project" value="UniProtKB-KW"/>
</dbReference>
<dbReference type="GO" id="GO:0006355">
    <property type="term" value="P:regulation of DNA-templated transcription"/>
    <property type="evidence" value="ECO:0007669"/>
    <property type="project" value="InterPro"/>
</dbReference>
<dbReference type="Gene3D" id="1.10.4180.10">
    <property type="entry name" value="Protein LEAFY"/>
    <property type="match status" value="1"/>
</dbReference>
<dbReference type="InterPro" id="IPR035209">
    <property type="entry name" value="FLO/LFY_C"/>
</dbReference>
<dbReference type="InterPro" id="IPR002910">
    <property type="entry name" value="FLO_LFY"/>
</dbReference>
<dbReference type="InterPro" id="IPR038276">
    <property type="entry name" value="Floricaula/leafy_C_sf"/>
</dbReference>
<dbReference type="InterPro" id="IPR035079">
    <property type="entry name" value="LFY_SAM"/>
</dbReference>
<dbReference type="PANTHER" id="PTHR36079">
    <property type="entry name" value="PROTEIN LEAFY"/>
    <property type="match status" value="1"/>
</dbReference>
<dbReference type="PANTHER" id="PTHR36079:SF1">
    <property type="entry name" value="PROTEIN LEAFY"/>
    <property type="match status" value="1"/>
</dbReference>
<dbReference type="Pfam" id="PF17538">
    <property type="entry name" value="C_LFY_FLO"/>
    <property type="match status" value="1"/>
</dbReference>
<dbReference type="Pfam" id="PF01698">
    <property type="entry name" value="SAM_LFY"/>
    <property type="match status" value="1"/>
</dbReference>
<evidence type="ECO:0000250" key="1"/>
<evidence type="ECO:0000256" key="2">
    <source>
        <dbReference type="SAM" id="MobiDB-lite"/>
    </source>
</evidence>
<evidence type="ECO:0000305" key="3"/>
<sequence>MDPESFSAAFFKWDQRPPALAPPQMQRSAGLEAQRIFHDFGVPNAAAMAASNNSSSCRKELNCLEELFRNYGVRYITLTKMVDMGFTVNTLVNMTEQELDDLVRTLVEIYRVELLVGEKYGIKSAIRAEKRRLEEAERKRMEQLFVDVDGKRKIDENALDTLSQEGLSVEEPQGDNAIILSQNNTSANFPLNLNAGMDPVLILQNSGHLGTTVSGLIGMPDTNYGSEQTKACKKQKRRRSKDSGEDGEERQREHPFIVTEPGELARGKKNGLDYLFDLYEQCGKFLLDVQHIAKERGEKCPTKVTNQVFRHAKHSGAGYINKPKMRHYVHCYALHCLDIEQSNRLRRAYKERGENVGAWRQACYYPLVAMAKDNGWDIEGVFNKHEKLRIWYVPTKLRQLCHLEKSKQSHL</sequence>